<protein>
    <recommendedName>
        <fullName evidence="1">tRNA-modifying protein YgfZ</fullName>
    </recommendedName>
</protein>
<comment type="function">
    <text evidence="1">Folate-binding protein involved in regulating the level of ATP-DnaA and in the modification of some tRNAs. It is probably a key factor in regulatory networks that act via tRNA modification, such as initiation of chromosomal replication.</text>
</comment>
<comment type="subcellular location">
    <subcellularLocation>
        <location evidence="1">Cytoplasm</location>
    </subcellularLocation>
</comment>
<comment type="similarity">
    <text evidence="1">Belongs to the tRNA-modifying YgfZ family.</text>
</comment>
<sequence length="326" mass="36015">MAFISFPPRHPSSSARLPLTLIALDDWALSTITGVDSEKYIQGQVTADVSQMTEQQHLLAAHCDAKGKMWSTLRLFRERDGFAWIERRSVREAQLTELKKYAVFSKVVIAPDDERVLLGVAGFQARAALANVFSELPNSENQVVRDGASTLLWFEHPAERFLLVTDVATANMLTEKLHGEAELNNSQQWLALDIEAGIPVIDAANSGQFIPQATNLQALGGISFKKGCYTGQEMVARAKFRGANKRALWLLAGKASRVPEAGEDLELQMGENWRRTGAILAATQLDDGQLLVQAVMNNDLEAESVFRVRDDANTLHIVPLPYSLEE</sequence>
<dbReference type="EMBL" id="FM200053">
    <property type="protein sequence ID" value="CAR60959.1"/>
    <property type="molecule type" value="Genomic_DNA"/>
</dbReference>
<dbReference type="RefSeq" id="WP_000874176.1">
    <property type="nucleotide sequence ID" value="NC_011147.1"/>
</dbReference>
<dbReference type="SMR" id="B5BFL3"/>
<dbReference type="KEGG" id="sek:SSPA2718"/>
<dbReference type="HOGENOM" id="CLU_007884_6_1_6"/>
<dbReference type="Proteomes" id="UP000001869">
    <property type="component" value="Chromosome"/>
</dbReference>
<dbReference type="GO" id="GO:0005737">
    <property type="term" value="C:cytoplasm"/>
    <property type="evidence" value="ECO:0007669"/>
    <property type="project" value="UniProtKB-SubCell"/>
</dbReference>
<dbReference type="GO" id="GO:0005542">
    <property type="term" value="F:folic acid binding"/>
    <property type="evidence" value="ECO:0007669"/>
    <property type="project" value="UniProtKB-UniRule"/>
</dbReference>
<dbReference type="GO" id="GO:0016226">
    <property type="term" value="P:iron-sulfur cluster assembly"/>
    <property type="evidence" value="ECO:0007669"/>
    <property type="project" value="TreeGrafter"/>
</dbReference>
<dbReference type="GO" id="GO:0009451">
    <property type="term" value="P:RNA modification"/>
    <property type="evidence" value="ECO:0007669"/>
    <property type="project" value="InterPro"/>
</dbReference>
<dbReference type="GO" id="GO:0008033">
    <property type="term" value="P:tRNA processing"/>
    <property type="evidence" value="ECO:0007669"/>
    <property type="project" value="UniProtKB-UniRule"/>
</dbReference>
<dbReference type="FunFam" id="2.40.30.160:FF:000001">
    <property type="entry name" value="tRNA-modifying protein YgfZ"/>
    <property type="match status" value="1"/>
</dbReference>
<dbReference type="FunFam" id="3.30.70.1400:FF:000002">
    <property type="entry name" value="tRNA-modifying protein YgfZ"/>
    <property type="match status" value="1"/>
</dbReference>
<dbReference type="FunFam" id="3.30.70.1630:FF:000001">
    <property type="entry name" value="tRNA-modifying protein YgfZ"/>
    <property type="match status" value="1"/>
</dbReference>
<dbReference type="Gene3D" id="2.40.30.160">
    <property type="match status" value="1"/>
</dbReference>
<dbReference type="Gene3D" id="3.30.70.1630">
    <property type="match status" value="1"/>
</dbReference>
<dbReference type="Gene3D" id="3.30.70.1400">
    <property type="entry name" value="Aminomethyltransferase beta-barrel domains"/>
    <property type="match status" value="1"/>
</dbReference>
<dbReference type="HAMAP" id="MF_01175">
    <property type="entry name" value="tRNA_modifying_YgfZ"/>
    <property type="match status" value="1"/>
</dbReference>
<dbReference type="InterPro" id="IPR006222">
    <property type="entry name" value="GCV_T_N"/>
</dbReference>
<dbReference type="InterPro" id="IPR029043">
    <property type="entry name" value="GcvT/YgfZ_C"/>
</dbReference>
<dbReference type="InterPro" id="IPR023758">
    <property type="entry name" value="tRNA-modifying_YgfZ"/>
</dbReference>
<dbReference type="InterPro" id="IPR045179">
    <property type="entry name" value="YgfZ/GcvT"/>
</dbReference>
<dbReference type="InterPro" id="IPR017703">
    <property type="entry name" value="YgfZ/GcvT_CS"/>
</dbReference>
<dbReference type="InterPro" id="IPR048451">
    <property type="entry name" value="YgfZ_barrel"/>
</dbReference>
<dbReference type="NCBIfam" id="NF007110">
    <property type="entry name" value="PRK09559.1"/>
    <property type="match status" value="1"/>
</dbReference>
<dbReference type="NCBIfam" id="TIGR03317">
    <property type="entry name" value="ygfZ_signature"/>
    <property type="match status" value="1"/>
</dbReference>
<dbReference type="PANTHER" id="PTHR22602">
    <property type="entry name" value="TRANSFERASE CAF17, MITOCHONDRIAL-RELATED"/>
    <property type="match status" value="1"/>
</dbReference>
<dbReference type="PANTHER" id="PTHR22602:SF0">
    <property type="entry name" value="TRANSFERASE CAF17, MITOCHONDRIAL-RELATED"/>
    <property type="match status" value="1"/>
</dbReference>
<dbReference type="Pfam" id="PF01571">
    <property type="entry name" value="GCV_T"/>
    <property type="match status" value="1"/>
</dbReference>
<dbReference type="Pfam" id="PF21130">
    <property type="entry name" value="YgfZ_barrel"/>
    <property type="match status" value="1"/>
</dbReference>
<dbReference type="SUPFAM" id="SSF101790">
    <property type="entry name" value="Aminomethyltransferase beta-barrel domain"/>
    <property type="match status" value="1"/>
</dbReference>
<dbReference type="SUPFAM" id="SSF103025">
    <property type="entry name" value="Folate-binding domain"/>
    <property type="match status" value="1"/>
</dbReference>
<reference key="1">
    <citation type="journal article" date="2009" name="BMC Genomics">
        <title>Pseudogene accumulation in the evolutionary histories of Salmonella enterica serovars Paratyphi A and Typhi.</title>
        <authorList>
            <person name="Holt K.E."/>
            <person name="Thomson N.R."/>
            <person name="Wain J."/>
            <person name="Langridge G.C."/>
            <person name="Hasan R."/>
            <person name="Bhutta Z.A."/>
            <person name="Quail M.A."/>
            <person name="Norbertczak H."/>
            <person name="Walker D."/>
            <person name="Simmonds M."/>
            <person name="White B."/>
            <person name="Bason N."/>
            <person name="Mungall K."/>
            <person name="Dougan G."/>
            <person name="Parkhill J."/>
        </authorList>
    </citation>
    <scope>NUCLEOTIDE SEQUENCE [LARGE SCALE GENOMIC DNA]</scope>
    <source>
        <strain>AKU_12601</strain>
    </source>
</reference>
<accession>B5BFL3</accession>
<feature type="chain" id="PRO_1000138085" description="tRNA-modifying protein YgfZ">
    <location>
        <begin position="1"/>
        <end position="326"/>
    </location>
</feature>
<feature type="binding site" evidence="1">
    <location>
        <position position="27"/>
    </location>
    <ligand>
        <name>folate</name>
        <dbReference type="ChEBI" id="CHEBI:62501"/>
    </ligand>
</feature>
<feature type="binding site" evidence="1">
    <location>
        <position position="189"/>
    </location>
    <ligand>
        <name>folate</name>
        <dbReference type="ChEBI" id="CHEBI:62501"/>
    </ligand>
</feature>
<organism>
    <name type="scientific">Salmonella paratyphi A (strain AKU_12601)</name>
    <dbReference type="NCBI Taxonomy" id="554290"/>
    <lineage>
        <taxon>Bacteria</taxon>
        <taxon>Pseudomonadati</taxon>
        <taxon>Pseudomonadota</taxon>
        <taxon>Gammaproteobacteria</taxon>
        <taxon>Enterobacterales</taxon>
        <taxon>Enterobacteriaceae</taxon>
        <taxon>Salmonella</taxon>
    </lineage>
</organism>
<proteinExistence type="inferred from homology"/>
<gene>
    <name evidence="1" type="primary">ygfZ</name>
    <name type="ordered locus">SSPA2718</name>
</gene>
<evidence type="ECO:0000255" key="1">
    <source>
        <dbReference type="HAMAP-Rule" id="MF_01175"/>
    </source>
</evidence>
<keyword id="KW-0963">Cytoplasm</keyword>
<keyword id="KW-0290">Folate-binding</keyword>
<keyword id="KW-0819">tRNA processing</keyword>
<name>YGFZ_SALPK</name>